<feature type="chain" id="PRO_0000130939" description="Small ribosomal subunit protein uS14B">
    <location>
        <begin position="1"/>
        <end position="61"/>
    </location>
</feature>
<feature type="binding site" evidence="1">
    <location>
        <position position="24"/>
    </location>
    <ligand>
        <name>Zn(2+)</name>
        <dbReference type="ChEBI" id="CHEBI:29105"/>
    </ligand>
</feature>
<feature type="binding site" evidence="1">
    <location>
        <position position="27"/>
    </location>
    <ligand>
        <name>Zn(2+)</name>
        <dbReference type="ChEBI" id="CHEBI:29105"/>
    </ligand>
</feature>
<feature type="binding site" evidence="1">
    <location>
        <position position="40"/>
    </location>
    <ligand>
        <name>Zn(2+)</name>
        <dbReference type="ChEBI" id="CHEBI:29105"/>
    </ligand>
</feature>
<feature type="binding site" evidence="1">
    <location>
        <position position="43"/>
    </location>
    <ligand>
        <name>Zn(2+)</name>
        <dbReference type="ChEBI" id="CHEBI:29105"/>
    </ligand>
</feature>
<accession>P66418</accession>
<accession>Q9L0C7</accession>
<dbReference type="EMBL" id="BA000030">
    <property type="protein sequence ID" value="BAC72651.1"/>
    <property type="molecule type" value="Genomic_DNA"/>
</dbReference>
<dbReference type="RefSeq" id="WP_003948630.1">
    <property type="nucleotide sequence ID" value="NZ_JZJK01000077.1"/>
</dbReference>
<dbReference type="SMR" id="P66418"/>
<dbReference type="KEGG" id="sma:SAVERM_4939"/>
<dbReference type="eggNOG" id="COG0199">
    <property type="taxonomic scope" value="Bacteria"/>
</dbReference>
<dbReference type="HOGENOM" id="CLU_139869_3_0_11"/>
<dbReference type="OrthoDB" id="9810484at2"/>
<dbReference type="Proteomes" id="UP000000428">
    <property type="component" value="Chromosome"/>
</dbReference>
<dbReference type="GO" id="GO:0005737">
    <property type="term" value="C:cytoplasm"/>
    <property type="evidence" value="ECO:0007669"/>
    <property type="project" value="UniProtKB-ARBA"/>
</dbReference>
<dbReference type="GO" id="GO:0015935">
    <property type="term" value="C:small ribosomal subunit"/>
    <property type="evidence" value="ECO:0007669"/>
    <property type="project" value="TreeGrafter"/>
</dbReference>
<dbReference type="GO" id="GO:0019843">
    <property type="term" value="F:rRNA binding"/>
    <property type="evidence" value="ECO:0007669"/>
    <property type="project" value="UniProtKB-UniRule"/>
</dbReference>
<dbReference type="GO" id="GO:0003735">
    <property type="term" value="F:structural constituent of ribosome"/>
    <property type="evidence" value="ECO:0007669"/>
    <property type="project" value="InterPro"/>
</dbReference>
<dbReference type="GO" id="GO:0008270">
    <property type="term" value="F:zinc ion binding"/>
    <property type="evidence" value="ECO:0007669"/>
    <property type="project" value="UniProtKB-UniRule"/>
</dbReference>
<dbReference type="GO" id="GO:0006412">
    <property type="term" value="P:translation"/>
    <property type="evidence" value="ECO:0007669"/>
    <property type="project" value="UniProtKB-UniRule"/>
</dbReference>
<dbReference type="FunFam" id="4.10.830.10:FF:000001">
    <property type="entry name" value="30S ribosomal protein S14 type Z"/>
    <property type="match status" value="1"/>
</dbReference>
<dbReference type="Gene3D" id="4.10.830.10">
    <property type="entry name" value="30s Ribosomal Protein S14, Chain N"/>
    <property type="match status" value="1"/>
</dbReference>
<dbReference type="HAMAP" id="MF_01364_B">
    <property type="entry name" value="Ribosomal_uS14_2_B"/>
    <property type="match status" value="1"/>
</dbReference>
<dbReference type="InterPro" id="IPR001209">
    <property type="entry name" value="Ribosomal_uS14"/>
</dbReference>
<dbReference type="InterPro" id="IPR023053">
    <property type="entry name" value="Ribosomal_uS14_bact"/>
</dbReference>
<dbReference type="InterPro" id="IPR018271">
    <property type="entry name" value="Ribosomal_uS14_CS"/>
</dbReference>
<dbReference type="InterPro" id="IPR043140">
    <property type="entry name" value="Ribosomal_uS14_sf"/>
</dbReference>
<dbReference type="NCBIfam" id="NF005974">
    <property type="entry name" value="PRK08061.1"/>
    <property type="match status" value="1"/>
</dbReference>
<dbReference type="PANTHER" id="PTHR19836">
    <property type="entry name" value="30S RIBOSOMAL PROTEIN S14"/>
    <property type="match status" value="1"/>
</dbReference>
<dbReference type="PANTHER" id="PTHR19836:SF19">
    <property type="entry name" value="SMALL RIBOSOMAL SUBUNIT PROTEIN US14M"/>
    <property type="match status" value="1"/>
</dbReference>
<dbReference type="Pfam" id="PF00253">
    <property type="entry name" value="Ribosomal_S14"/>
    <property type="match status" value="1"/>
</dbReference>
<dbReference type="SUPFAM" id="SSF57716">
    <property type="entry name" value="Glucocorticoid receptor-like (DNA-binding domain)"/>
    <property type="match status" value="1"/>
</dbReference>
<dbReference type="PROSITE" id="PS00527">
    <property type="entry name" value="RIBOSOMAL_S14"/>
    <property type="match status" value="1"/>
</dbReference>
<protein>
    <recommendedName>
        <fullName evidence="1">Small ribosomal subunit protein uS14B</fullName>
    </recommendedName>
    <alternativeName>
        <fullName evidence="2">30S ribosomal protein S14 type Z</fullName>
    </alternativeName>
</protein>
<gene>
    <name evidence="1" type="primary">rpsZ</name>
    <name evidence="1" type="synonym">rpsN1</name>
    <name type="ordered locus">SAV_4939</name>
</gene>
<name>RS14Z_STRAW</name>
<reference key="1">
    <citation type="journal article" date="2001" name="Proc. Natl. Acad. Sci. U.S.A.">
        <title>Genome sequence of an industrial microorganism Streptomyces avermitilis: deducing the ability of producing secondary metabolites.</title>
        <authorList>
            <person name="Omura S."/>
            <person name="Ikeda H."/>
            <person name="Ishikawa J."/>
            <person name="Hanamoto A."/>
            <person name="Takahashi C."/>
            <person name="Shinose M."/>
            <person name="Takahashi Y."/>
            <person name="Horikawa H."/>
            <person name="Nakazawa H."/>
            <person name="Osonoe T."/>
            <person name="Kikuchi H."/>
            <person name="Shiba T."/>
            <person name="Sakaki Y."/>
            <person name="Hattori M."/>
        </authorList>
    </citation>
    <scope>NUCLEOTIDE SEQUENCE [LARGE SCALE GENOMIC DNA]</scope>
    <source>
        <strain>ATCC 31267 / DSM 46492 / JCM 5070 / NBRC 14893 / NCIMB 12804 / NRRL 8165 / MA-4680</strain>
    </source>
</reference>
<reference key="2">
    <citation type="journal article" date="2003" name="Nat. Biotechnol.">
        <title>Complete genome sequence and comparative analysis of the industrial microorganism Streptomyces avermitilis.</title>
        <authorList>
            <person name="Ikeda H."/>
            <person name="Ishikawa J."/>
            <person name="Hanamoto A."/>
            <person name="Shinose M."/>
            <person name="Kikuchi H."/>
            <person name="Shiba T."/>
            <person name="Sakaki Y."/>
            <person name="Hattori M."/>
            <person name="Omura S."/>
        </authorList>
    </citation>
    <scope>NUCLEOTIDE SEQUENCE [LARGE SCALE GENOMIC DNA]</scope>
    <source>
        <strain>ATCC 31267 / DSM 46492 / JCM 5070 / NBRC 14893 / NCIMB 12804 / NRRL 8165 / MA-4680</strain>
    </source>
</reference>
<organism>
    <name type="scientific">Streptomyces avermitilis (strain ATCC 31267 / DSM 46492 / JCM 5070 / NBRC 14893 / NCIMB 12804 / NRRL 8165 / MA-4680)</name>
    <dbReference type="NCBI Taxonomy" id="227882"/>
    <lineage>
        <taxon>Bacteria</taxon>
        <taxon>Bacillati</taxon>
        <taxon>Actinomycetota</taxon>
        <taxon>Actinomycetes</taxon>
        <taxon>Kitasatosporales</taxon>
        <taxon>Streptomycetaceae</taxon>
        <taxon>Streptomyces</taxon>
    </lineage>
</organism>
<keyword id="KW-0479">Metal-binding</keyword>
<keyword id="KW-1185">Reference proteome</keyword>
<keyword id="KW-0687">Ribonucleoprotein</keyword>
<keyword id="KW-0689">Ribosomal protein</keyword>
<keyword id="KW-0694">RNA-binding</keyword>
<keyword id="KW-0699">rRNA-binding</keyword>
<keyword id="KW-0862">Zinc</keyword>
<sequence length="61" mass="6949">MAKKALIAKAARKPKFGVRGYTRCQRCGRPHSVYRKFGLCRVCLREMAHRGELPGVTKSSW</sequence>
<proteinExistence type="inferred from homology"/>
<evidence type="ECO:0000255" key="1">
    <source>
        <dbReference type="HAMAP-Rule" id="MF_01364"/>
    </source>
</evidence>
<evidence type="ECO:0000305" key="2"/>
<comment type="function">
    <text evidence="1">Binds 16S rRNA, required for the assembly of 30S particles and may also be responsible for determining the conformation of the 16S rRNA at the A site.</text>
</comment>
<comment type="cofactor">
    <cofactor evidence="1">
        <name>Zn(2+)</name>
        <dbReference type="ChEBI" id="CHEBI:29105"/>
    </cofactor>
    <text evidence="1">Binds 1 zinc ion per subunit.</text>
</comment>
<comment type="subunit">
    <text evidence="1">Part of the 30S ribosomal subunit. Contacts proteins S3 and S10.</text>
</comment>
<comment type="similarity">
    <text evidence="1">Belongs to the universal ribosomal protein uS14 family. Zinc-binding uS14 subfamily.</text>
</comment>